<organism>
    <name type="scientific">Oryctolagus cuniculus</name>
    <name type="common">Rabbit</name>
    <dbReference type="NCBI Taxonomy" id="9986"/>
    <lineage>
        <taxon>Eukaryota</taxon>
        <taxon>Metazoa</taxon>
        <taxon>Chordata</taxon>
        <taxon>Craniata</taxon>
        <taxon>Vertebrata</taxon>
        <taxon>Euteleostomi</taxon>
        <taxon>Mammalia</taxon>
        <taxon>Eutheria</taxon>
        <taxon>Euarchontoglires</taxon>
        <taxon>Glires</taxon>
        <taxon>Lagomorpha</taxon>
        <taxon>Leporidae</taxon>
        <taxon>Oryctolagus</taxon>
    </lineage>
</organism>
<sequence length="552" mass="61944">MGFDVLLDQAGSLGRFQILQIAFFFVTSMITYTHILLENFTAAIPGHRCWVPLLDNHTTSGNDSDILSQDALLRVSIPLDSNLRPEKCRRFIHPQWQLLYLNGTSPSTNEPDTEPCVDGWVYDQSSFSSTIVTKWDLVCEFQSLKSVVQTLFMSGSLLGGLMFGRLSDRYGRKAIYTWCLLQTAIADTCAIFAPTFVVFCIFRFLAGLTTINIMTNAFILATEWTVPKLQYIGITLILCSYSIGQMLLGGLAFAIRDWYTLHLTVSIPLFVLSLLSRRLVESARWLVTTNQLDEGTKALRRVARINGKKSAGEILTIEFVRSAMQEELNKAQTKTSVIHLLRAPKLRMIICFLSFIRLGASVPFMGLILNLQDLGSSIFLFQVLFGAITFISRCSAHLIMKHMDRRINQSLFFFLVGLCILVNTFLSQEMQTLRVVLATLGIGTVSAANATFFVHALELTPTTFRSTTAGINNVFSRMGSVLAPLLMTLVVYSPHLPWVMYGVFPILAGLIVFCLPETRNRPLPNTIQDVENDTKESRKVKEEDTFIKVTQF</sequence>
<dbReference type="RefSeq" id="XP_002721038.1">
    <property type="nucleotide sequence ID" value="XM_002720992.3"/>
</dbReference>
<dbReference type="SMR" id="G1SZD9"/>
<dbReference type="STRING" id="9986.ENSOCUP00000009036"/>
<dbReference type="PaxDb" id="9986-ENSOCUP00000009036"/>
<dbReference type="Ensembl" id="ENSOCUT00000010486.3">
    <property type="protein sequence ID" value="ENSOCUP00000009036.3"/>
    <property type="gene ID" value="ENSOCUG00000014725.3"/>
</dbReference>
<dbReference type="GeneID" id="100346057"/>
<dbReference type="KEGG" id="ocu:100346057"/>
<dbReference type="CTD" id="283238"/>
<dbReference type="eggNOG" id="KOG0255">
    <property type="taxonomic scope" value="Eukaryota"/>
</dbReference>
<dbReference type="GeneTree" id="ENSGT00940000164763"/>
<dbReference type="HOGENOM" id="CLU_001265_33_3_1"/>
<dbReference type="OrthoDB" id="2544694at2759"/>
<dbReference type="TreeFam" id="TF315847"/>
<dbReference type="Proteomes" id="UP000001811">
    <property type="component" value="Unplaced"/>
</dbReference>
<dbReference type="Bgee" id="ENSOCUG00000014725">
    <property type="expression patterns" value="Expressed in adult mammalian kidney and 8 other cell types or tissues"/>
</dbReference>
<dbReference type="GO" id="GO:0005886">
    <property type="term" value="C:plasma membrane"/>
    <property type="evidence" value="ECO:0007669"/>
    <property type="project" value="UniProtKB-SubCell"/>
</dbReference>
<dbReference type="GO" id="GO:0022857">
    <property type="term" value="F:transmembrane transporter activity"/>
    <property type="evidence" value="ECO:0007669"/>
    <property type="project" value="InterPro"/>
</dbReference>
<dbReference type="GO" id="GO:0006869">
    <property type="term" value="P:lipid transport"/>
    <property type="evidence" value="ECO:0007669"/>
    <property type="project" value="UniProtKB-KW"/>
</dbReference>
<dbReference type="GO" id="GO:0006811">
    <property type="term" value="P:monoatomic ion transport"/>
    <property type="evidence" value="ECO:0007669"/>
    <property type="project" value="UniProtKB-KW"/>
</dbReference>
<dbReference type="GO" id="GO:0008202">
    <property type="term" value="P:steroid metabolic process"/>
    <property type="evidence" value="ECO:0007669"/>
    <property type="project" value="UniProtKB-KW"/>
</dbReference>
<dbReference type="CDD" id="cd17374">
    <property type="entry name" value="MFS_OAT"/>
    <property type="match status" value="1"/>
</dbReference>
<dbReference type="FunFam" id="1.20.1250.20:FF:000023">
    <property type="entry name" value="Solute carrier family 22 member 6"/>
    <property type="match status" value="1"/>
</dbReference>
<dbReference type="Gene3D" id="1.20.1250.20">
    <property type="entry name" value="MFS general substrate transporter like domains"/>
    <property type="match status" value="1"/>
</dbReference>
<dbReference type="InterPro" id="IPR011701">
    <property type="entry name" value="MFS"/>
</dbReference>
<dbReference type="InterPro" id="IPR020846">
    <property type="entry name" value="MFS_dom"/>
</dbReference>
<dbReference type="InterPro" id="IPR036259">
    <property type="entry name" value="MFS_trans_sf"/>
</dbReference>
<dbReference type="PANTHER" id="PTHR24064">
    <property type="entry name" value="SOLUTE CARRIER FAMILY 22 MEMBER"/>
    <property type="match status" value="1"/>
</dbReference>
<dbReference type="Pfam" id="PF07690">
    <property type="entry name" value="MFS_1"/>
    <property type="match status" value="1"/>
</dbReference>
<dbReference type="SUPFAM" id="SSF103473">
    <property type="entry name" value="MFS general substrate transporter"/>
    <property type="match status" value="1"/>
</dbReference>
<dbReference type="PROSITE" id="PS50850">
    <property type="entry name" value="MFS"/>
    <property type="match status" value="1"/>
</dbReference>
<accession>G1SZD9</accession>
<proteinExistence type="inferred from homology"/>
<reference key="1">
    <citation type="journal article" date="2011" name="Nature">
        <title>A high-resolution map of human evolutionary constraint using 29 mammals.</title>
        <authorList>
            <person name="Lindblad-Toh K."/>
            <person name="Garber M."/>
            <person name="Zuk O."/>
            <person name="Lin M.F."/>
            <person name="Parker B.J."/>
            <person name="Washietl S."/>
            <person name="Kheradpour P."/>
            <person name="Ernst J."/>
            <person name="Jordan G."/>
            <person name="Mauceli E."/>
            <person name="Ward L.D."/>
            <person name="Lowe C.B."/>
            <person name="Holloway A.K."/>
            <person name="Clamp M."/>
            <person name="Gnerre S."/>
            <person name="Alfoldi J."/>
            <person name="Beal K."/>
            <person name="Chang J."/>
            <person name="Clawson H."/>
            <person name="Cuff J."/>
            <person name="Di Palma F."/>
            <person name="Fitzgerald S."/>
            <person name="Flicek P."/>
            <person name="Guttman M."/>
            <person name="Hubisz M.J."/>
            <person name="Jaffe D.B."/>
            <person name="Jungreis I."/>
            <person name="Kent W.J."/>
            <person name="Kostka D."/>
            <person name="Lara M."/>
            <person name="Martins A.L."/>
            <person name="Massingham T."/>
            <person name="Moltke I."/>
            <person name="Raney B.J."/>
            <person name="Rasmussen M.D."/>
            <person name="Robinson J."/>
            <person name="Stark A."/>
            <person name="Vilella A.J."/>
            <person name="Wen J."/>
            <person name="Xie X."/>
            <person name="Zody M.C."/>
            <person name="Baldwin J."/>
            <person name="Bloom T."/>
            <person name="Chin C.W."/>
            <person name="Heiman D."/>
            <person name="Nicol R."/>
            <person name="Nusbaum C."/>
            <person name="Young S."/>
            <person name="Wilkinson J."/>
            <person name="Worley K.C."/>
            <person name="Kovar C.L."/>
            <person name="Muzny D.M."/>
            <person name="Gibbs R.A."/>
            <person name="Cree A."/>
            <person name="Dihn H.H."/>
            <person name="Fowler G."/>
            <person name="Jhangiani S."/>
            <person name="Joshi V."/>
            <person name="Lee S."/>
            <person name="Lewis L.R."/>
            <person name="Nazareth L.V."/>
            <person name="Okwuonu G."/>
            <person name="Santibanez J."/>
            <person name="Warren W.C."/>
            <person name="Mardis E.R."/>
            <person name="Weinstock G.M."/>
            <person name="Wilson R.K."/>
            <person name="Delehaunty K."/>
            <person name="Dooling D."/>
            <person name="Fronik C."/>
            <person name="Fulton L."/>
            <person name="Fulton B."/>
            <person name="Graves T."/>
            <person name="Minx P."/>
            <person name="Sodergren E."/>
            <person name="Birney E."/>
            <person name="Margulies E.H."/>
            <person name="Herrero J."/>
            <person name="Green E.D."/>
            <person name="Haussler D."/>
            <person name="Siepel A."/>
            <person name="Goldman N."/>
            <person name="Pollard K.S."/>
            <person name="Pedersen J.S."/>
            <person name="Lander E.S."/>
            <person name="Kellis M."/>
        </authorList>
    </citation>
    <scope>NUCLEOTIDE SEQUENCE [LARGE SCALE GENOMIC DNA]</scope>
</reference>
<reference key="2">
    <citation type="journal article" date="2019" name="PLoS Genet.">
        <title>Unraveling the functional role of the orphan solute carrier, SLC22A24 in the transport of steroid conjugates through metabolomic and genome-wide association studies.</title>
        <authorList>
            <person name="Yee S.W."/>
            <person name="Stecula A."/>
            <person name="Chien H.C."/>
            <person name="Zou L."/>
            <person name="Feofanova E.V."/>
            <person name="van Borselen M."/>
            <person name="Cheung K.W.K."/>
            <person name="Yousri N.A."/>
            <person name="Suhre K."/>
            <person name="Kinchen J.M."/>
            <person name="Boerwinkle E."/>
            <person name="Irannejad R."/>
            <person name="Yu B."/>
            <person name="Giacomini K.M."/>
        </authorList>
    </citation>
    <scope>FUNCTION</scope>
    <scope>TRANSPORTER ACTIVITY</scope>
    <scope>SUBCELLULAR LOCATION</scope>
</reference>
<gene>
    <name evidence="1" type="primary">SLC22A24</name>
</gene>
<comment type="function">
    <text evidence="1 3">Renal transmembrane organic anion/dicarboxylate exchanger that participates in the reabsorption of conjugated steroids, as well as bile acids, driven by an outward gradient of dicarboxylates such as glutarate or succinate (By similarity). Transports androstanediol glucuronide (5alpha-androstane-3alpha,17beta-diol 3-O-(beta-D-glucuronate)), estrone 3-sulfate, and estradiol-17-glucuronide (17beta-estradiol 17-O-(beta-D-glucuronate)), and taurocholate (PubMed:31553721).</text>
</comment>
<comment type="catalytic activity">
    <reaction evidence="5">
        <text>estrone 3-sulfate(out) + glutarate(in) = estrone 3-sulfate(in) + glutarate(out)</text>
        <dbReference type="Rhea" id="RHEA:72151"/>
        <dbReference type="ChEBI" id="CHEBI:30921"/>
        <dbReference type="ChEBI" id="CHEBI:60050"/>
    </reaction>
</comment>
<comment type="catalytic activity">
    <reaction evidence="5">
        <text>17beta-estradiol 17-O-(beta-D-glucuronate)(out) + glutarate(in) = 17beta-estradiol 17-O-(beta-D-glucuronate)(in) + glutarate(out)</text>
        <dbReference type="Rhea" id="RHEA:72155"/>
        <dbReference type="ChEBI" id="CHEBI:30921"/>
        <dbReference type="ChEBI" id="CHEBI:82961"/>
    </reaction>
</comment>
<comment type="catalytic activity">
    <reaction evidence="5">
        <text>taurocholate(out) + glutarate(in) = taurocholate(in) + glutarate(out)</text>
        <dbReference type="Rhea" id="RHEA:72159"/>
        <dbReference type="ChEBI" id="CHEBI:30921"/>
        <dbReference type="ChEBI" id="CHEBI:36257"/>
    </reaction>
</comment>
<comment type="catalytic activity">
    <reaction evidence="5">
        <text>5alpha-androstane-3alpha,17beta-diol 3-O-(beta-D-glucuronate)(out) + glutarate(in) = 5alpha-androstane-3alpha,17beta-diol 3-O-(beta-D-glucuronate)(in) + glutarate(out)</text>
        <dbReference type="Rhea" id="RHEA:72175"/>
        <dbReference type="ChEBI" id="CHEBI:30921"/>
        <dbReference type="ChEBI" id="CHEBI:191859"/>
    </reaction>
</comment>
<comment type="catalytic activity">
    <reaction evidence="1">
        <text>glycocholate(out) + glutarate(in) = glycocholate(in) + glutarate(out)</text>
        <dbReference type="Rhea" id="RHEA:72351"/>
        <dbReference type="ChEBI" id="CHEBI:29746"/>
        <dbReference type="ChEBI" id="CHEBI:30921"/>
    </reaction>
</comment>
<comment type="catalytic activity">
    <reaction evidence="1">
        <text>dehydroepiandrosterone 3-sulfate(out) + glutarate(in) = dehydroepiandrosterone 3-sulfate(in) + glutarate(out)</text>
        <dbReference type="Rhea" id="RHEA:72355"/>
        <dbReference type="ChEBI" id="CHEBI:30921"/>
        <dbReference type="ChEBI" id="CHEBI:57905"/>
    </reaction>
</comment>
<comment type="catalytic activity">
    <reaction evidence="1">
        <text>glutarate(in) + succinate(out) = glutarate(out) + succinate(in)</text>
        <dbReference type="Rhea" id="RHEA:72359"/>
        <dbReference type="ChEBI" id="CHEBI:30031"/>
        <dbReference type="ChEBI" id="CHEBI:30921"/>
    </reaction>
</comment>
<comment type="subcellular location">
    <subcellularLocation>
        <location evidence="3">Cell membrane</location>
        <topology evidence="2">Multi-pass membrane protein</topology>
    </subcellularLocation>
</comment>
<comment type="similarity">
    <text evidence="4">Belongs to the major facilitator (TC 2.A.1) superfamily. Organic cation transporter (TC 2.A.1.19) family.</text>
</comment>
<protein>
    <recommendedName>
        <fullName>Steroid transmembrane transporter SLC22A24</fullName>
    </recommendedName>
    <alternativeName>
        <fullName evidence="1">Solute carrier family 22 member 24</fullName>
    </alternativeName>
</protein>
<keyword id="KW-1003">Cell membrane</keyword>
<keyword id="KW-0406">Ion transport</keyword>
<keyword id="KW-0443">Lipid metabolism</keyword>
<keyword id="KW-0445">Lipid transport</keyword>
<keyword id="KW-0472">Membrane</keyword>
<keyword id="KW-1185">Reference proteome</keyword>
<keyword id="KW-0753">Steroid metabolism</keyword>
<keyword id="KW-0812">Transmembrane</keyword>
<keyword id="KW-1133">Transmembrane helix</keyword>
<keyword id="KW-0813">Transport</keyword>
<feature type="chain" id="PRO_0000456644" description="Steroid transmembrane transporter SLC22A24">
    <location>
        <begin position="1"/>
        <end position="552"/>
    </location>
</feature>
<feature type="transmembrane region" description="Helical" evidence="2">
    <location>
        <begin position="16"/>
        <end position="36"/>
    </location>
</feature>
<feature type="transmembrane region" description="Helical" evidence="2">
    <location>
        <begin position="144"/>
        <end position="164"/>
    </location>
</feature>
<feature type="transmembrane region" description="Helical" evidence="2">
    <location>
        <begin position="175"/>
        <end position="197"/>
    </location>
</feature>
<feature type="transmembrane region" description="Helical" evidence="2">
    <location>
        <begin position="201"/>
        <end position="220"/>
    </location>
</feature>
<feature type="transmembrane region" description="Helical" evidence="2">
    <location>
        <begin position="232"/>
        <end position="252"/>
    </location>
</feature>
<feature type="transmembrane region" description="Helical" evidence="2">
    <location>
        <begin position="255"/>
        <end position="275"/>
    </location>
</feature>
<feature type="transmembrane region" description="Helical" evidence="2">
    <location>
        <begin position="349"/>
        <end position="369"/>
    </location>
</feature>
<feature type="transmembrane region" description="Helical" evidence="2">
    <location>
        <begin position="371"/>
        <end position="391"/>
    </location>
</feature>
<feature type="transmembrane region" description="Helical" evidence="2">
    <location>
        <begin position="407"/>
        <end position="427"/>
    </location>
</feature>
<feature type="transmembrane region" description="Helical" evidence="2">
    <location>
        <begin position="435"/>
        <end position="455"/>
    </location>
</feature>
<feature type="transmembrane region" description="Helical" evidence="2">
    <location>
        <begin position="474"/>
        <end position="494"/>
    </location>
</feature>
<feature type="transmembrane region" description="Helical" evidence="2">
    <location>
        <begin position="496"/>
        <end position="516"/>
    </location>
</feature>
<name>S22AO_RABIT</name>
<evidence type="ECO:0000250" key="1">
    <source>
        <dbReference type="UniProtKB" id="Q8N4F4"/>
    </source>
</evidence>
<evidence type="ECO:0000255" key="2"/>
<evidence type="ECO:0000269" key="3">
    <source>
    </source>
</evidence>
<evidence type="ECO:0000305" key="4"/>
<evidence type="ECO:0000305" key="5">
    <source>
    </source>
</evidence>